<organism>
    <name type="scientific">Mus musculus</name>
    <name type="common">Mouse</name>
    <dbReference type="NCBI Taxonomy" id="10090"/>
    <lineage>
        <taxon>Eukaryota</taxon>
        <taxon>Metazoa</taxon>
        <taxon>Chordata</taxon>
        <taxon>Craniata</taxon>
        <taxon>Vertebrata</taxon>
        <taxon>Euteleostomi</taxon>
        <taxon>Mammalia</taxon>
        <taxon>Eutheria</taxon>
        <taxon>Euarchontoglires</taxon>
        <taxon>Glires</taxon>
        <taxon>Rodentia</taxon>
        <taxon>Myomorpha</taxon>
        <taxon>Muroidea</taxon>
        <taxon>Muridae</taxon>
        <taxon>Murinae</taxon>
        <taxon>Mus</taxon>
        <taxon>Mus</taxon>
    </lineage>
</organism>
<reference key="1">
    <citation type="submission" date="2000-06" db="EMBL/GenBank/DDBJ databases">
        <title>Murine cholesterol cholelithiasis is linked to a mutation in the Abcc2 gene.</title>
        <authorList>
            <person name="Bouchard G."/>
            <person name="Chao H."/>
            <person name="Lammert F."/>
            <person name="Carey M.C."/>
            <person name="Paigen B."/>
        </authorList>
    </citation>
    <scope>NUCLEOTIDE SEQUENCE [MRNA]</scope>
    <source>
        <strain>AKR/J</strain>
        <strain>C57L/J</strain>
    </source>
</reference>
<reference key="2">
    <citation type="journal article" date="2006" name="J. Pharmacol. Exp. Ther.">
        <title>Characterization of mice lacking the multidrug resistance protein MRP2 (ABCC2).</title>
        <authorList>
            <person name="Chu X.Y."/>
            <person name="Strauss J.R."/>
            <person name="Mariano M.A."/>
            <person name="Li J."/>
            <person name="Newton D.J."/>
            <person name="Cai X."/>
            <person name="Wang R.W."/>
            <person name="Yabut J."/>
            <person name="Hartley D.P."/>
            <person name="Evans D.C."/>
            <person name="Evers R."/>
        </authorList>
    </citation>
    <scope>DISRUPTION PHENOTYPE</scope>
    <scope>TISSUE SPECIFICITY</scope>
</reference>
<reference key="3">
    <citation type="journal article" date="2010" name="Cell">
        <title>A tissue-specific atlas of mouse protein phosphorylation and expression.</title>
        <authorList>
            <person name="Huttlin E.L."/>
            <person name="Jedrychowski M.P."/>
            <person name="Elias J.E."/>
            <person name="Goswami T."/>
            <person name="Rad R."/>
            <person name="Beausoleil S.A."/>
            <person name="Villen J."/>
            <person name="Haas W."/>
            <person name="Sowa M.E."/>
            <person name="Gygi S.P."/>
        </authorList>
    </citation>
    <scope>PHOSPHORYLATION [LARGE SCALE ANALYSIS] AT SER-876</scope>
    <scope>IDENTIFICATION BY MASS SPECTROMETRY [LARGE SCALE ANALYSIS]</scope>
    <source>
        <tissue>Kidney</tissue>
        <tissue>Liver</tissue>
    </source>
</reference>
<name>MRP2_MOUSE</name>
<dbReference type="EC" id="7.6.2.-" evidence="3"/>
<dbReference type="EC" id="7.6.2.2" evidence="3"/>
<dbReference type="EC" id="7.6.2.3" evidence="3"/>
<dbReference type="EMBL" id="AF282772">
    <property type="protein sequence ID" value="AAL36985.1"/>
    <property type="molecule type" value="mRNA"/>
</dbReference>
<dbReference type="EMBL" id="AF282773">
    <property type="protein sequence ID" value="AAL36986.1"/>
    <property type="molecule type" value="mRNA"/>
</dbReference>
<dbReference type="CCDS" id="CCDS29838.1"/>
<dbReference type="RefSeq" id="NP_038834.2">
    <property type="nucleotide sequence ID" value="NM_013806.2"/>
</dbReference>
<dbReference type="SMR" id="Q8VI47"/>
<dbReference type="FunCoup" id="Q8VI47">
    <property type="interactions" value="147"/>
</dbReference>
<dbReference type="STRING" id="10090.ENSMUSP00000026208"/>
<dbReference type="ChEMBL" id="CHEMBL2073681"/>
<dbReference type="GlyCosmos" id="Q8VI47">
    <property type="glycosylation" value="4 sites, No reported glycans"/>
</dbReference>
<dbReference type="GlyGen" id="Q8VI47">
    <property type="glycosylation" value="4 sites, 1 N-linked glycan (1 site)"/>
</dbReference>
<dbReference type="iPTMnet" id="Q8VI47"/>
<dbReference type="PhosphoSitePlus" id="Q8VI47"/>
<dbReference type="SwissPalm" id="Q8VI47"/>
<dbReference type="jPOST" id="Q8VI47"/>
<dbReference type="PaxDb" id="10090-ENSMUSP00000026208"/>
<dbReference type="PeptideAtlas" id="Q8VI47"/>
<dbReference type="ProteomicsDB" id="290323"/>
<dbReference type="Antibodypedia" id="17520">
    <property type="antibodies" value="367 antibodies from 39 providers"/>
</dbReference>
<dbReference type="DNASU" id="12780"/>
<dbReference type="Ensembl" id="ENSMUST00000026208.6">
    <property type="protein sequence ID" value="ENSMUSP00000026208.5"/>
    <property type="gene ID" value="ENSMUSG00000025194.6"/>
</dbReference>
<dbReference type="GeneID" id="12780"/>
<dbReference type="KEGG" id="mmu:12780"/>
<dbReference type="UCSC" id="uc008how.1">
    <property type="organism name" value="mouse"/>
</dbReference>
<dbReference type="AGR" id="MGI:1352447"/>
<dbReference type="CTD" id="1244"/>
<dbReference type="MGI" id="MGI:1352447">
    <property type="gene designation" value="Abcc2"/>
</dbReference>
<dbReference type="VEuPathDB" id="HostDB:ENSMUSG00000025194"/>
<dbReference type="eggNOG" id="KOG0054">
    <property type="taxonomic scope" value="Eukaryota"/>
</dbReference>
<dbReference type="GeneTree" id="ENSGT00940000161741"/>
<dbReference type="HOGENOM" id="CLU_000604_27_3_1"/>
<dbReference type="InParanoid" id="Q8VI47"/>
<dbReference type="OMA" id="RRRYILW"/>
<dbReference type="OrthoDB" id="6500128at2759"/>
<dbReference type="PhylomeDB" id="Q8VI47"/>
<dbReference type="TreeFam" id="TF105199"/>
<dbReference type="BRENDA" id="7.6.2.3">
    <property type="organism ID" value="3474"/>
</dbReference>
<dbReference type="Reactome" id="R-MMU-189483">
    <property type="pathway name" value="Heme degradation"/>
</dbReference>
<dbReference type="Reactome" id="R-MMU-382556">
    <property type="pathway name" value="ABC-family proteins mediated transport"/>
</dbReference>
<dbReference type="Reactome" id="R-MMU-9749641">
    <property type="pathway name" value="Aspirin ADME"/>
</dbReference>
<dbReference type="Reactome" id="R-MMU-9753281">
    <property type="pathway name" value="Paracetamol ADME"/>
</dbReference>
<dbReference type="Reactome" id="R-MMU-9754706">
    <property type="pathway name" value="Atorvastatin ADME"/>
</dbReference>
<dbReference type="BioGRID-ORCS" id="12780">
    <property type="hits" value="3 hits in 79 CRISPR screens"/>
</dbReference>
<dbReference type="ChiTaRS" id="Abcc2">
    <property type="organism name" value="mouse"/>
</dbReference>
<dbReference type="PRO" id="PR:Q8VI47"/>
<dbReference type="Proteomes" id="UP000000589">
    <property type="component" value="Chromosome 19"/>
</dbReference>
<dbReference type="RNAct" id="Q8VI47">
    <property type="molecule type" value="protein"/>
</dbReference>
<dbReference type="Bgee" id="ENSMUSG00000025194">
    <property type="expression patterns" value="Expressed in left lobe of liver and 47 other cell types or tissues"/>
</dbReference>
<dbReference type="ExpressionAtlas" id="Q8VI47">
    <property type="expression patterns" value="baseline and differential"/>
</dbReference>
<dbReference type="GO" id="GO:0016324">
    <property type="term" value="C:apical plasma membrane"/>
    <property type="evidence" value="ECO:0000314"/>
    <property type="project" value="MGI"/>
</dbReference>
<dbReference type="GO" id="GO:0009986">
    <property type="term" value="C:cell surface"/>
    <property type="evidence" value="ECO:0007669"/>
    <property type="project" value="Ensembl"/>
</dbReference>
<dbReference type="GO" id="GO:0046581">
    <property type="term" value="C:intercellular canaliculus"/>
    <property type="evidence" value="ECO:0000314"/>
    <property type="project" value="MGI"/>
</dbReference>
<dbReference type="GO" id="GO:0016020">
    <property type="term" value="C:membrane"/>
    <property type="evidence" value="ECO:0000314"/>
    <property type="project" value="MGI"/>
</dbReference>
<dbReference type="GO" id="GO:0005886">
    <property type="term" value="C:plasma membrane"/>
    <property type="evidence" value="ECO:0000314"/>
    <property type="project" value="MGI"/>
</dbReference>
<dbReference type="GO" id="GO:0015431">
    <property type="term" value="F:ABC-type glutathione S-conjugate transporter activity"/>
    <property type="evidence" value="ECO:0007669"/>
    <property type="project" value="UniProtKB-EC"/>
</dbReference>
<dbReference type="GO" id="GO:0008559">
    <property type="term" value="F:ABC-type xenobiotic transporter activity"/>
    <property type="evidence" value="ECO:0007669"/>
    <property type="project" value="UniProtKB-EC"/>
</dbReference>
<dbReference type="GO" id="GO:0005524">
    <property type="term" value="F:ATP binding"/>
    <property type="evidence" value="ECO:0007669"/>
    <property type="project" value="UniProtKB-KW"/>
</dbReference>
<dbReference type="GO" id="GO:0016887">
    <property type="term" value="F:ATP hydrolysis activity"/>
    <property type="evidence" value="ECO:0007669"/>
    <property type="project" value="InterPro"/>
</dbReference>
<dbReference type="GO" id="GO:0042626">
    <property type="term" value="F:ATPase-coupled transmembrane transporter activity"/>
    <property type="evidence" value="ECO:0000250"/>
    <property type="project" value="UniProtKB"/>
</dbReference>
<dbReference type="GO" id="GO:0015127">
    <property type="term" value="F:bilirubin transmembrane transporter activity"/>
    <property type="evidence" value="ECO:0007669"/>
    <property type="project" value="Ensembl"/>
</dbReference>
<dbReference type="GO" id="GO:0015721">
    <property type="term" value="P:bile acid and bile salt transport"/>
    <property type="evidence" value="ECO:0000250"/>
    <property type="project" value="UniProtKB"/>
</dbReference>
<dbReference type="GO" id="GO:0071716">
    <property type="term" value="P:leukotriene transport"/>
    <property type="evidence" value="ECO:0007669"/>
    <property type="project" value="Ensembl"/>
</dbReference>
<dbReference type="GO" id="GO:0046618">
    <property type="term" value="P:xenobiotic export from cell"/>
    <property type="evidence" value="ECO:0007669"/>
    <property type="project" value="Ensembl"/>
</dbReference>
<dbReference type="GO" id="GO:0006855">
    <property type="term" value="P:xenobiotic transmembrane transport"/>
    <property type="evidence" value="ECO:0007669"/>
    <property type="project" value="Ensembl"/>
</dbReference>
<dbReference type="CDD" id="cd18595">
    <property type="entry name" value="ABC_6TM_MRP1_2_3_6_D1_like"/>
    <property type="match status" value="1"/>
</dbReference>
<dbReference type="CDD" id="cd18603">
    <property type="entry name" value="ABC_6TM_MRP1_2_3_6_D2_like"/>
    <property type="match status" value="1"/>
</dbReference>
<dbReference type="CDD" id="cd03250">
    <property type="entry name" value="ABCC_MRP_domain1"/>
    <property type="match status" value="1"/>
</dbReference>
<dbReference type="CDD" id="cd03244">
    <property type="entry name" value="ABCC_MRP_domain2"/>
    <property type="match status" value="1"/>
</dbReference>
<dbReference type="FunFam" id="3.40.50.300:FF:000293">
    <property type="entry name" value="ATP binding cassette subfamily C member 1"/>
    <property type="match status" value="1"/>
</dbReference>
<dbReference type="FunFam" id="1.20.1560.10:FF:000001">
    <property type="entry name" value="ATP-binding cassette subfamily C member 1"/>
    <property type="match status" value="1"/>
</dbReference>
<dbReference type="FunFam" id="1.20.1560.10:FF:000007">
    <property type="entry name" value="ATP-binding cassette subfamily C member 1"/>
    <property type="match status" value="1"/>
</dbReference>
<dbReference type="FunFam" id="3.40.50.300:FF:000074">
    <property type="entry name" value="Multidrug resistance-associated protein 5 isoform 1"/>
    <property type="match status" value="1"/>
</dbReference>
<dbReference type="Gene3D" id="1.20.1560.10">
    <property type="entry name" value="ABC transporter type 1, transmembrane domain"/>
    <property type="match status" value="2"/>
</dbReference>
<dbReference type="Gene3D" id="3.40.50.300">
    <property type="entry name" value="P-loop containing nucleotide triphosphate hydrolases"/>
    <property type="match status" value="2"/>
</dbReference>
<dbReference type="InterPro" id="IPR003593">
    <property type="entry name" value="AAA+_ATPase"/>
</dbReference>
<dbReference type="InterPro" id="IPR011527">
    <property type="entry name" value="ABC1_TM_dom"/>
</dbReference>
<dbReference type="InterPro" id="IPR036640">
    <property type="entry name" value="ABC1_TM_sf"/>
</dbReference>
<dbReference type="InterPro" id="IPR003439">
    <property type="entry name" value="ABC_transporter-like_ATP-bd"/>
</dbReference>
<dbReference type="InterPro" id="IPR050173">
    <property type="entry name" value="ABC_transporter_C-like"/>
</dbReference>
<dbReference type="InterPro" id="IPR005292">
    <property type="entry name" value="MRP"/>
</dbReference>
<dbReference type="InterPro" id="IPR027417">
    <property type="entry name" value="P-loop_NTPase"/>
</dbReference>
<dbReference type="InterPro" id="IPR056227">
    <property type="entry name" value="TMD0_ABC"/>
</dbReference>
<dbReference type="NCBIfam" id="TIGR00957">
    <property type="entry name" value="MRP_assoc_pro"/>
    <property type="match status" value="1"/>
</dbReference>
<dbReference type="PANTHER" id="PTHR24223">
    <property type="entry name" value="ATP-BINDING CASSETTE SUB-FAMILY C"/>
    <property type="match status" value="1"/>
</dbReference>
<dbReference type="PANTHER" id="PTHR24223:SF176">
    <property type="entry name" value="ATP-BINDING CASSETTE SUB-FAMILY C MEMBER 2"/>
    <property type="match status" value="1"/>
</dbReference>
<dbReference type="Pfam" id="PF00664">
    <property type="entry name" value="ABC_membrane"/>
    <property type="match status" value="2"/>
</dbReference>
<dbReference type="Pfam" id="PF00005">
    <property type="entry name" value="ABC_tran"/>
    <property type="match status" value="2"/>
</dbReference>
<dbReference type="Pfam" id="PF24357">
    <property type="entry name" value="TMD0_ABC"/>
    <property type="match status" value="1"/>
</dbReference>
<dbReference type="SMART" id="SM00382">
    <property type="entry name" value="AAA"/>
    <property type="match status" value="2"/>
</dbReference>
<dbReference type="SUPFAM" id="SSF90123">
    <property type="entry name" value="ABC transporter transmembrane region"/>
    <property type="match status" value="2"/>
</dbReference>
<dbReference type="SUPFAM" id="SSF52540">
    <property type="entry name" value="P-loop containing nucleoside triphosphate hydrolases"/>
    <property type="match status" value="2"/>
</dbReference>
<dbReference type="PROSITE" id="PS50929">
    <property type="entry name" value="ABC_TM1F"/>
    <property type="match status" value="2"/>
</dbReference>
<dbReference type="PROSITE" id="PS50893">
    <property type="entry name" value="ABC_TRANSPORTER_2"/>
    <property type="match status" value="2"/>
</dbReference>
<gene>
    <name evidence="10" type="primary">Abcc2</name>
</gene>
<protein>
    <recommendedName>
        <fullName>ATP-binding cassette sub-family C member 2</fullName>
        <ecNumber evidence="3">7.6.2.-</ecNumber>
        <ecNumber evidence="3">7.6.2.2</ecNumber>
        <ecNumber evidence="3">7.6.2.3</ecNumber>
    </recommendedName>
    <alternativeName>
        <fullName evidence="9">Canalicular multispecific organic anion transporter 1</fullName>
    </alternativeName>
    <alternativeName>
        <fullName evidence="3">Multidrug resistance-associated protein 2</fullName>
    </alternativeName>
</protein>
<accession>Q8VI47</accession>
<accession>Q8VI46</accession>
<feature type="chain" id="PRO_0000093357" description="ATP-binding cassette sub-family C member 2">
    <location>
        <begin position="1"/>
        <end position="1543"/>
    </location>
</feature>
<feature type="topological domain" description="Extracellular" evidence="1">
    <location>
        <begin position="1"/>
        <end position="26"/>
    </location>
</feature>
<feature type="transmembrane region" description="Helical; Name=1" evidence="6">
    <location>
        <begin position="27"/>
        <end position="47"/>
    </location>
</feature>
<feature type="topological domain" description="Cytoplasmic" evidence="1">
    <location>
        <begin position="48"/>
        <end position="67"/>
    </location>
</feature>
<feature type="transmembrane region" description="Helical; Name=2" evidence="6">
    <location>
        <begin position="68"/>
        <end position="88"/>
    </location>
</feature>
<feature type="topological domain" description="Extracellular" evidence="1">
    <location>
        <begin position="89"/>
        <end position="92"/>
    </location>
</feature>
<feature type="transmembrane region" description="Helical; Name=3" evidence="6">
    <location>
        <begin position="93"/>
        <end position="113"/>
    </location>
</feature>
<feature type="topological domain" description="Cytoplasmic" evidence="1">
    <location>
        <begin position="114"/>
        <end position="125"/>
    </location>
</feature>
<feature type="transmembrane region" description="Helical; Name=4" evidence="6">
    <location>
        <begin position="126"/>
        <end position="146"/>
    </location>
</feature>
<feature type="topological domain" description="Extracellular" evidence="1">
    <location>
        <begin position="147"/>
        <end position="164"/>
    </location>
</feature>
<feature type="transmembrane region" description="Helical; Name=5" evidence="6">
    <location>
        <begin position="165"/>
        <end position="185"/>
    </location>
</feature>
<feature type="topological domain" description="Cytoplasmic" evidence="1">
    <location>
        <begin position="186"/>
        <end position="311"/>
    </location>
</feature>
<feature type="transmembrane region" description="Helical; Name=6" evidence="6">
    <location>
        <begin position="312"/>
        <end position="332"/>
    </location>
</feature>
<feature type="topological domain" description="Extracellular" evidence="1">
    <location>
        <begin position="333"/>
        <end position="358"/>
    </location>
</feature>
<feature type="transmembrane region" description="Helical; Name=7" evidence="6">
    <location>
        <begin position="359"/>
        <end position="379"/>
    </location>
</feature>
<feature type="topological domain" description="Cytoplasmic" evidence="1">
    <location>
        <begin position="380"/>
        <end position="435"/>
    </location>
</feature>
<feature type="transmembrane region" description="Helical; Name=8" evidence="6">
    <location>
        <begin position="436"/>
        <end position="456"/>
    </location>
</feature>
<feature type="topological domain" description="Extracellular" evidence="1">
    <location>
        <begin position="457"/>
        <end position="459"/>
    </location>
</feature>
<feature type="transmembrane region" description="Helical; Name=9" evidence="6">
    <location>
        <begin position="460"/>
        <end position="480"/>
    </location>
</feature>
<feature type="topological domain" description="Cytoplasmic" evidence="1">
    <location>
        <begin position="481"/>
        <end position="542"/>
    </location>
</feature>
<feature type="transmembrane region" description="Helical; Name=10" evidence="6">
    <location>
        <begin position="543"/>
        <end position="563"/>
    </location>
</feature>
<feature type="topological domain" description="Extracellular" evidence="1">
    <location>
        <begin position="564"/>
        <end position="585"/>
    </location>
</feature>
<feature type="transmembrane region" description="Helical; Name=11" evidence="6">
    <location>
        <begin position="586"/>
        <end position="606"/>
    </location>
</feature>
<feature type="topological domain" description="Cytoplasmic" evidence="1">
    <location>
        <begin position="607"/>
        <end position="969"/>
    </location>
</feature>
<feature type="transmembrane region" description="Helical; Name=12" evidence="6">
    <location>
        <begin position="970"/>
        <end position="990"/>
    </location>
</feature>
<feature type="topological domain" description="Extracellular" evidence="1">
    <location>
        <begin position="991"/>
        <end position="1031"/>
    </location>
</feature>
<feature type="transmembrane region" description="Helical; Name=13" evidence="6">
    <location>
        <begin position="1032"/>
        <end position="1052"/>
    </location>
</feature>
<feature type="topological domain" description="Cytoplasmic" evidence="1">
    <location>
        <begin position="1053"/>
        <end position="1095"/>
    </location>
</feature>
<feature type="transmembrane region" description="Helical; Name=14" evidence="6">
    <location>
        <begin position="1096"/>
        <end position="1116"/>
    </location>
</feature>
<feature type="topological domain" description="Extracellular" evidence="1">
    <location>
        <position position="1117"/>
    </location>
</feature>
<feature type="transmembrane region" description="Helical; Name=15" evidence="6">
    <location>
        <begin position="1118"/>
        <end position="1138"/>
    </location>
</feature>
<feature type="topological domain" description="Cytoplasmic" evidence="1">
    <location>
        <begin position="1139"/>
        <end position="1209"/>
    </location>
</feature>
<feature type="transmembrane region" description="Helical; Name=16" evidence="6">
    <location>
        <begin position="1210"/>
        <end position="1230"/>
    </location>
</feature>
<feature type="topological domain" description="Extracellular" evidence="1">
    <location>
        <begin position="1231"/>
        <end position="1232"/>
    </location>
</feature>
<feature type="transmembrane region" description="Helical; Name=17" evidence="6">
    <location>
        <begin position="1233"/>
        <end position="1253"/>
    </location>
</feature>
<feature type="topological domain" description="Cytoplasmic" evidence="1">
    <location>
        <begin position="1254"/>
        <end position="1543"/>
    </location>
</feature>
<feature type="domain" description="ABC transmembrane type-1 1" evidence="6">
    <location>
        <begin position="320"/>
        <end position="603"/>
    </location>
</feature>
<feature type="domain" description="ABC transporter 1" evidence="5">
    <location>
        <begin position="635"/>
        <end position="859"/>
    </location>
</feature>
<feature type="domain" description="ABC transmembrane type-1 2" evidence="6">
    <location>
        <begin position="977"/>
        <end position="1262"/>
    </location>
</feature>
<feature type="domain" description="ABC transporter 2" evidence="5">
    <location>
        <begin position="1298"/>
        <end position="1532"/>
    </location>
</feature>
<feature type="region of interest" description="Disordered" evidence="7">
    <location>
        <begin position="260"/>
        <end position="285"/>
    </location>
</feature>
<feature type="region of interest" description="Disordered" evidence="7">
    <location>
        <begin position="903"/>
        <end position="927"/>
    </location>
</feature>
<feature type="compositionally biased region" description="Polar residues" evidence="7">
    <location>
        <begin position="263"/>
        <end position="283"/>
    </location>
</feature>
<feature type="compositionally biased region" description="Low complexity" evidence="7">
    <location>
        <begin position="908"/>
        <end position="917"/>
    </location>
</feature>
<feature type="binding site" evidence="5">
    <location>
        <begin position="669"/>
        <end position="676"/>
    </location>
    <ligand>
        <name>ATP</name>
        <dbReference type="ChEBI" id="CHEBI:30616"/>
        <label>1</label>
    </ligand>
</feature>
<feature type="binding site" evidence="5">
    <location>
        <begin position="1332"/>
        <end position="1339"/>
    </location>
    <ligand>
        <name>ATP</name>
        <dbReference type="ChEBI" id="CHEBI:30616"/>
        <label>2</label>
    </ligand>
</feature>
<feature type="modified residue" description="Phosphoserine" evidence="2">
    <location>
        <position position="279"/>
    </location>
</feature>
<feature type="modified residue" description="Phosphoserine" evidence="3">
    <location>
        <position position="281"/>
    </location>
</feature>
<feature type="modified residue" description="Phosphoserine" evidence="11">
    <location>
        <position position="876"/>
    </location>
</feature>
<feature type="modified residue" description="Phosphoserine" evidence="3">
    <location>
        <position position="924"/>
    </location>
</feature>
<feature type="modified residue" description="Phosphoserine" evidence="3">
    <location>
        <position position="928"/>
    </location>
</feature>
<feature type="modified residue" description="Phosphoserine" evidence="3">
    <location>
        <position position="1436"/>
    </location>
</feature>
<feature type="glycosylation site" description="N-linked (GlcNAc...) asparagine" evidence="4">
    <location>
        <position position="6"/>
    </location>
</feature>
<feature type="glycosylation site" description="N-linked (GlcNAc...) asparagine" evidence="4">
    <location>
        <position position="11"/>
    </location>
</feature>
<feature type="glycosylation site" description="N-linked (GlcNAc...) asparagine" evidence="4">
    <location>
        <position position="160"/>
    </location>
</feature>
<feature type="glycosylation site" description="N-linked (GlcNAc...) asparagine" evidence="4">
    <location>
        <position position="1009"/>
    </location>
</feature>
<feature type="sequence conflict" description="In Ref. 1; AAL36985." evidence="9" ref="1">
    <original>Q</original>
    <variation>R</variation>
    <location>
        <position position="613"/>
    </location>
</feature>
<proteinExistence type="evidence at protein level"/>
<sequence length="1543" mass="173671">MDEFCNSTFWNLSLLKSPEADLPLCFEQTVLVWIPLGFLWLLAPWQLYRIYRSRTKRFAITKFYLAKQVFVVCLLILAAIDLSLALTEDTGQATIPPVKYTNPILYLCTWLLVLVIQHCRQCCIQKNSWFLSMFWILSLLCGIFQFQTLIRALLQDSKSNMTYSCLFFVSYGFQIVILILSAFSESSDSTHAPSATASFLSSVTFSWYDSTVLKGYKHPLTIEDVWDIEENLKAKSLTSKFKTIMTKDLQKARQALQRRLKKSQQSPEGTSHGLTKKQSQSQDVLVLEDSKKKKKKSEATKDFPKSWLVKALFKTFYVVILKSFILKLAHDILLFLNPQLLKFLIGFVKDPDSYPWVGYIYAILMFSVTLIQSFFLQCYFQFCFVLGMTVRTTIIASVYKKALTLSNLARRQYTIGETVNLMSVDSQKLMDVTNYIHLLWSSVLQIALSIFFLWRELGPSILAGVGLMVLLVPVNGVLATKIRKIQVQNMKNKDKRLKIMNEILSGIKILKYFAWEPSFKEQVNSIRKKELRNLLRFSQLQTILIFILHLTPTLVSVITFSVYVLVDSQNVLNAEKAFTSITLFNILRFPLAMLPMVISSVIQASVSVDRLEQYLGSDDLDLSAIRHVCHFDKAVQFSEASFTWDRDLEATIQDVNLDIKPGQLVAVVGTVGSGKSSLISAMLGEMENVHGHITIKGSIAYVPQQAWIQNGTIKDNILFGSEYDEKKYQRVIEACALLPDLEMLPGGDMAEIGEKGINLSGGQKHRVSLARATYQDADIYILDDPLSAVDTHVGKHIFNKVVGPNGLLSGKTRILVTHGIHFLPQVDEIVVLGKGTILEKGSYSDLMDKKGVFAKNWKTFMKHSGPEGEATVDNDSEEEDGDCGLIPTVEEIPDDAASLTMRRENSLRRTLSRSSRSGSRRGKSLKSSLKIKSVNALNKKEEVVKGQKLIKKEFVETGKVKFSIYLKYLQAVGWWSLLFIVIFYVLNYVAFIGTNLWLSAWTSDSEKQNGTDNSPSQRDMRIGVFGALGIAQGIFLLSSSLWSIYACRNASKTLHRQLLTNILRAPMSFFDTTPTGRIVNRFAGDISTVDDTLPQTLRSWLLCFFGIVSTLVMICMATPIFIIIIIPLSILYVSVQVFYVATSRQLRRLDSVTKSPIYSHFSETVSGLPVIRAFEHQQRFLANSEKQIDTNQKCVFSWITSNRWLAIRLELVGNLIVFCSALLLVIYKNSLTGDTVGFVLSNALNITQTLNWLVRMTSEVETNIVAVERINEYINVDNEAPWVTDKKPPADWPKKGEIQFNNYQVRYRPELDLVLKGITCNIKSTEKVGVVGRTGAGKSSLTNCLFRILESAGGQIIIDGIDIASIGLHDLRGRLTIIPQDPILFSGNLRMNLDPFNKYSDEEIWRALELAHLKSFVAGLQLGLLHEVTEGGDNLSIGQRQLLCLGRAVLRKSKILVLDEATAAVDLETDSLIQTTIRNEFSQCTVITIAHRLHTIMDSDKIMVLDSGKIVEYGSPEELLSNMGPFYLMAKEAGIESVNHTEL</sequence>
<evidence type="ECO:0000250" key="1"/>
<evidence type="ECO:0000250" key="2">
    <source>
        <dbReference type="UniProtKB" id="Q63120"/>
    </source>
</evidence>
<evidence type="ECO:0000250" key="3">
    <source>
        <dbReference type="UniProtKB" id="Q92887"/>
    </source>
</evidence>
<evidence type="ECO:0000255" key="4"/>
<evidence type="ECO:0000255" key="5">
    <source>
        <dbReference type="PROSITE-ProRule" id="PRU00434"/>
    </source>
</evidence>
<evidence type="ECO:0000255" key="6">
    <source>
        <dbReference type="PROSITE-ProRule" id="PRU00441"/>
    </source>
</evidence>
<evidence type="ECO:0000256" key="7">
    <source>
        <dbReference type="SAM" id="MobiDB-lite"/>
    </source>
</evidence>
<evidence type="ECO:0000269" key="8">
    <source>
    </source>
</evidence>
<evidence type="ECO:0000305" key="9"/>
<evidence type="ECO:0000312" key="10">
    <source>
        <dbReference type="MGI" id="MGI:1352447"/>
    </source>
</evidence>
<evidence type="ECO:0007744" key="11">
    <source>
    </source>
</evidence>
<keyword id="KW-0067">ATP-binding</keyword>
<keyword id="KW-1003">Cell membrane</keyword>
<keyword id="KW-0325">Glycoprotein</keyword>
<keyword id="KW-0445">Lipid transport</keyword>
<keyword id="KW-0472">Membrane</keyword>
<keyword id="KW-0547">Nucleotide-binding</keyword>
<keyword id="KW-0597">Phosphoprotein</keyword>
<keyword id="KW-1185">Reference proteome</keyword>
<keyword id="KW-0677">Repeat</keyword>
<keyword id="KW-1278">Translocase</keyword>
<keyword id="KW-0812">Transmembrane</keyword>
<keyword id="KW-1133">Transmembrane helix</keyword>
<keyword id="KW-0813">Transport</keyword>
<comment type="function">
    <text evidence="3">ATP-dependent transporter of the ATP-binding cassette (ABC) family that binds and hydrolyzes ATP to enable active transport of various substrates including many drugs, toxicants and endogenous compound across cell membranes. Transports a wide variety of conjugated organic anions such as sulfate-, glucuronide- and glutathione (GSH)-conjugates of endo- and xenobiotics substrates. Mediates hepatobiliary excretion of mono- and bis-glucuronidated bilirubin molecules and therefore play an important role in bilirubin detoxification. Mediates also hepatobiliary excretion of others glucuronide conjugates such as 17beta-estradiol 17-glucosiduronic acid and leukotriene C4. Transports sulfated bile salt such as taurolithocholate sulfate. Transports various anticancer drugs, such as anthracycline, vinca alkaloid and methotrexate and HIV-drugs such as protease inhibitors.</text>
</comment>
<comment type="catalytic activity">
    <reaction evidence="3">
        <text>an S-substituted glutathione(in) + ATP + H2O = an S-substituted glutathione(out) + ADP + phosphate + H(+)</text>
        <dbReference type="Rhea" id="RHEA:19121"/>
        <dbReference type="ChEBI" id="CHEBI:15377"/>
        <dbReference type="ChEBI" id="CHEBI:15378"/>
        <dbReference type="ChEBI" id="CHEBI:30616"/>
        <dbReference type="ChEBI" id="CHEBI:43474"/>
        <dbReference type="ChEBI" id="CHEBI:90779"/>
        <dbReference type="ChEBI" id="CHEBI:456216"/>
        <dbReference type="EC" id="7.6.2.3"/>
    </reaction>
    <physiologicalReaction direction="left-to-right" evidence="3">
        <dbReference type="Rhea" id="RHEA:19122"/>
    </physiologicalReaction>
</comment>
<comment type="catalytic activity">
    <reaction evidence="3">
        <text>taurolithocholate 3-sulfate(in) + ATP + H2O = taurolithocholate 3-sulfate(out) + ADP + phosphate + H(+)</text>
        <dbReference type="Rhea" id="RHEA:50084"/>
        <dbReference type="ChEBI" id="CHEBI:15377"/>
        <dbReference type="ChEBI" id="CHEBI:15378"/>
        <dbReference type="ChEBI" id="CHEBI:30616"/>
        <dbReference type="ChEBI" id="CHEBI:43474"/>
        <dbReference type="ChEBI" id="CHEBI:58301"/>
        <dbReference type="ChEBI" id="CHEBI:456216"/>
    </reaction>
    <physiologicalReaction direction="left-to-right" evidence="3">
        <dbReference type="Rhea" id="RHEA:50085"/>
    </physiologicalReaction>
</comment>
<comment type="catalytic activity">
    <reaction evidence="3">
        <text>ATP + H2O + xenobioticSide 1 = ADP + phosphate + xenobioticSide 2.</text>
        <dbReference type="EC" id="7.6.2.2"/>
    </reaction>
</comment>
<comment type="catalytic activity">
    <reaction evidence="3">
        <text>leukotriene C4(in) + ATP + H2O = leukotriene C4(out) + ADP + phosphate + H(+)</text>
        <dbReference type="Rhea" id="RHEA:38963"/>
        <dbReference type="ChEBI" id="CHEBI:15377"/>
        <dbReference type="ChEBI" id="CHEBI:15378"/>
        <dbReference type="ChEBI" id="CHEBI:30616"/>
        <dbReference type="ChEBI" id="CHEBI:43474"/>
        <dbReference type="ChEBI" id="CHEBI:57973"/>
        <dbReference type="ChEBI" id="CHEBI:456216"/>
    </reaction>
    <physiologicalReaction direction="left-to-right" evidence="3">
        <dbReference type="Rhea" id="RHEA:38964"/>
    </physiologicalReaction>
</comment>
<comment type="catalytic activity">
    <reaction evidence="3">
        <text>17beta-estradiol 17-O-(beta-D-glucuronate)(in) + ATP + H2O = 17beta-estradiol 17-O-(beta-D-glucuronate)(out) + ADP + phosphate + H(+)</text>
        <dbReference type="Rhea" id="RHEA:60128"/>
        <dbReference type="ChEBI" id="CHEBI:15377"/>
        <dbReference type="ChEBI" id="CHEBI:15378"/>
        <dbReference type="ChEBI" id="CHEBI:30616"/>
        <dbReference type="ChEBI" id="CHEBI:43474"/>
        <dbReference type="ChEBI" id="CHEBI:82961"/>
        <dbReference type="ChEBI" id="CHEBI:456216"/>
    </reaction>
    <physiologicalReaction direction="left-to-right" evidence="3">
        <dbReference type="Rhea" id="RHEA:60129"/>
    </physiologicalReaction>
</comment>
<comment type="catalytic activity">
    <reaction evidence="3">
        <text>(4Z,15Z)-bilirubin IXalpha C8-beta-D-glucuronoside(in) + ATP + H2O = (4Z,15Z)-bilirubin IXalpha C8-beta-D-glucuronoside(out) + ADP + phosphate + H(+)</text>
        <dbReference type="Rhea" id="RHEA:66180"/>
        <dbReference type="ChEBI" id="CHEBI:15377"/>
        <dbReference type="ChEBI" id="CHEBI:15378"/>
        <dbReference type="ChEBI" id="CHEBI:30616"/>
        <dbReference type="ChEBI" id="CHEBI:43474"/>
        <dbReference type="ChEBI" id="CHEBI:229704"/>
        <dbReference type="ChEBI" id="CHEBI:456216"/>
    </reaction>
    <physiologicalReaction direction="left-to-right" evidence="3">
        <dbReference type="Rhea" id="RHEA:66181"/>
    </physiologicalReaction>
</comment>
<comment type="catalytic activity">
    <reaction evidence="3">
        <text>(4Z,15Z)-bilirubin IXalpha C8,C12-beta-D-bisglucuronoside(in) + ATP + H2O = (4Z,15Z)-bilirubin IXalpha C8,C12-beta-D-bisglucuronoside(out) + ADP + phosphate + H(+)</text>
        <dbReference type="Rhea" id="RHEA:66192"/>
        <dbReference type="ChEBI" id="CHEBI:15377"/>
        <dbReference type="ChEBI" id="CHEBI:15378"/>
        <dbReference type="ChEBI" id="CHEBI:30616"/>
        <dbReference type="ChEBI" id="CHEBI:43474"/>
        <dbReference type="ChEBI" id="CHEBI:229706"/>
        <dbReference type="ChEBI" id="CHEBI:456216"/>
    </reaction>
</comment>
<comment type="subcellular location">
    <subcellularLocation>
        <location evidence="3">Apical cell membrane</location>
        <topology evidence="4">Multi-pass membrane protein</topology>
    </subcellularLocation>
</comment>
<comment type="tissue specificity">
    <text evidence="8">Expressed in liver.</text>
</comment>
<comment type="disruption phenotype">
    <text evidence="8">These mice are healthy and show no phenotypic abnormalities. Mice display hyperbilirubinemia and reduced levels of biliary GSH.</text>
</comment>
<comment type="similarity">
    <text evidence="9">Belongs to the ABC transporter superfamily. ABCC family. Conjugate transporter (TC 3.A.1.208) subfamily.</text>
</comment>